<evidence type="ECO:0000255" key="1">
    <source>
        <dbReference type="HAMAP-Rule" id="MF_01316"/>
    </source>
</evidence>
<dbReference type="EMBL" id="DQ898156">
    <property type="protein sequence ID" value="ABI32408.1"/>
    <property type="molecule type" value="Genomic_DNA"/>
</dbReference>
<dbReference type="RefSeq" id="YP_740101.1">
    <property type="nucleotide sequence ID" value="NC_008325.1"/>
</dbReference>
<dbReference type="SMR" id="Q0G9X8"/>
<dbReference type="GeneID" id="4266707"/>
<dbReference type="GO" id="GO:0009535">
    <property type="term" value="C:chloroplast thylakoid membrane"/>
    <property type="evidence" value="ECO:0007669"/>
    <property type="project" value="UniProtKB-SubCell"/>
</dbReference>
<dbReference type="GO" id="GO:0009539">
    <property type="term" value="C:photosystem II reaction center"/>
    <property type="evidence" value="ECO:0007669"/>
    <property type="project" value="InterPro"/>
</dbReference>
<dbReference type="GO" id="GO:0015979">
    <property type="term" value="P:photosynthesis"/>
    <property type="evidence" value="ECO:0007669"/>
    <property type="project" value="UniProtKB-UniRule"/>
</dbReference>
<dbReference type="HAMAP" id="MF_01316">
    <property type="entry name" value="PSII_PsbI"/>
    <property type="match status" value="1"/>
</dbReference>
<dbReference type="InterPro" id="IPR003686">
    <property type="entry name" value="PSII_PsbI"/>
</dbReference>
<dbReference type="InterPro" id="IPR037271">
    <property type="entry name" value="PSII_PsbI_sf"/>
</dbReference>
<dbReference type="NCBIfam" id="NF002735">
    <property type="entry name" value="PRK02655.1"/>
    <property type="match status" value="1"/>
</dbReference>
<dbReference type="PANTHER" id="PTHR35772">
    <property type="entry name" value="PHOTOSYSTEM II REACTION CENTER PROTEIN I"/>
    <property type="match status" value="1"/>
</dbReference>
<dbReference type="PANTHER" id="PTHR35772:SF1">
    <property type="entry name" value="PHOTOSYSTEM II REACTION CENTER PROTEIN I"/>
    <property type="match status" value="1"/>
</dbReference>
<dbReference type="Pfam" id="PF02532">
    <property type="entry name" value="PsbI"/>
    <property type="match status" value="1"/>
</dbReference>
<dbReference type="SUPFAM" id="SSF161041">
    <property type="entry name" value="Photosystem II reaction center protein I, PsbI"/>
    <property type="match status" value="1"/>
</dbReference>
<proteinExistence type="inferred from homology"/>
<organism>
    <name type="scientific">Daucus carota</name>
    <name type="common">Wild carrot</name>
    <dbReference type="NCBI Taxonomy" id="4039"/>
    <lineage>
        <taxon>Eukaryota</taxon>
        <taxon>Viridiplantae</taxon>
        <taxon>Streptophyta</taxon>
        <taxon>Embryophyta</taxon>
        <taxon>Tracheophyta</taxon>
        <taxon>Spermatophyta</taxon>
        <taxon>Magnoliopsida</taxon>
        <taxon>eudicotyledons</taxon>
        <taxon>Gunneridae</taxon>
        <taxon>Pentapetalae</taxon>
        <taxon>asterids</taxon>
        <taxon>campanulids</taxon>
        <taxon>Apiales</taxon>
        <taxon>Apiaceae</taxon>
        <taxon>Apioideae</taxon>
        <taxon>Scandiceae</taxon>
        <taxon>Daucinae</taxon>
        <taxon>Daucus</taxon>
        <taxon>Daucus sect. Daucus</taxon>
    </lineage>
</organism>
<keyword id="KW-0150">Chloroplast</keyword>
<keyword id="KW-0472">Membrane</keyword>
<keyword id="KW-0602">Photosynthesis</keyword>
<keyword id="KW-0604">Photosystem II</keyword>
<keyword id="KW-0934">Plastid</keyword>
<keyword id="KW-0674">Reaction center</keyword>
<keyword id="KW-0793">Thylakoid</keyword>
<keyword id="KW-0812">Transmembrane</keyword>
<keyword id="KW-1133">Transmembrane helix</keyword>
<comment type="function">
    <text evidence="1">One of the components of the core complex of photosystem II (PSII), required for its stability and/or assembly. PSII is a light-driven water:plastoquinone oxidoreductase that uses light energy to abstract electrons from H(2)O, generating O(2) and a proton gradient subsequently used for ATP formation. It consists of a core antenna complex that captures photons, and an electron transfer chain that converts photonic excitation into a charge separation.</text>
</comment>
<comment type="subunit">
    <text evidence="1">PSII is composed of 1 copy each of membrane proteins PsbA, PsbB, PsbC, PsbD, PsbE, PsbF, PsbH, PsbI, PsbJ, PsbK, PsbL, PsbM, PsbT, PsbX, PsbY, PsbZ, Psb30/Ycf12, at least 3 peripheral proteins of the oxygen-evolving complex and a large number of cofactors. It forms dimeric complexes.</text>
</comment>
<comment type="subcellular location">
    <subcellularLocation>
        <location evidence="1">Plastid</location>
        <location evidence="1">Chloroplast thylakoid membrane</location>
        <topology evidence="1">Single-pass membrane protein</topology>
    </subcellularLocation>
</comment>
<comment type="similarity">
    <text evidence="1">Belongs to the PsbI family.</text>
</comment>
<feature type="chain" id="PRO_0000275789" description="Photosystem II reaction center protein I">
    <location>
        <begin position="1"/>
        <end position="36"/>
    </location>
</feature>
<feature type="transmembrane region" description="Helical" evidence="1">
    <location>
        <begin position="4"/>
        <end position="24"/>
    </location>
</feature>
<gene>
    <name evidence="1" type="primary">psbI</name>
</gene>
<sequence length="36" mass="4168">MLTLKLFVYTVVIFFVSLFIFGFLSNDPGRNPGREE</sequence>
<accession>Q0G9X8</accession>
<reference key="1">
    <citation type="journal article" date="2006" name="BMC Genomics">
        <title>Complete plastid genome sequence of Daucus carota: implications for biotechnology and phylogeny of angiosperms.</title>
        <authorList>
            <person name="Ruhlman T."/>
            <person name="Lee S.-B."/>
            <person name="Jansen R.K."/>
            <person name="Hostetler J.B."/>
            <person name="Tallon L.J."/>
            <person name="Town C.D."/>
            <person name="Daniell H."/>
        </authorList>
    </citation>
    <scope>NUCLEOTIDE SEQUENCE [LARGE SCALE GENOMIC DNA]</scope>
    <source>
        <strain>cv. Danvers Half-long</strain>
    </source>
</reference>
<name>PSBI_DAUCA</name>
<geneLocation type="chloroplast"/>
<protein>
    <recommendedName>
        <fullName evidence="1">Photosystem II reaction center protein I</fullName>
        <shortName evidence="1">PSII-I</shortName>
    </recommendedName>
    <alternativeName>
        <fullName evidence="1">PSII 4.8 kDa protein</fullName>
    </alternativeName>
</protein>